<sequence>MKHSHEEIRKIIPEMRRVQQIHFIGIGGAGMSGIAEILLNEGYQISGSDIADGVVTQRLAQAGAKIYIGHAAEHIKGASVVVVSSAIKDDNPELVASKQKRIPVIQRAQMLAEIMRFRHGIAVAGTHGKTTTTAMISMIYTQAKLDPTFVNGGLVKSAGKNAHLGASRYLIAEADESDASFLHLQPMVSVVTNMEPDHMDTYEGDFEKMKATYVKFLHNLPFYGLAVMCADDPVLMELVPKVGRQVITYGFSEQADYRIEDYEQTGFQGHYTVFCPNNERINVLLNVPGKHNALNATAALAVAKEEGIANEAILEALADFQGAGRRFDQLGEFIRPNGKVRLVDDYGHHPTEVDVTIKAAREGWGDKRIVMIFQPHRYSRTRDLFDDFVQVLSLVDALIMLDVYAAGEAPIVGADSKSLCRSIRNLGKVDPILVSDTSQLGDVLDQIIQDGDLILAQGAGSVSKISRGLAESWKN</sequence>
<gene>
    <name evidence="1" type="primary">murC</name>
    <name type="ordered locus">CGSHiGG_09355</name>
</gene>
<name>MURC_HAEIG</name>
<accession>A5UIR3</accession>
<organism>
    <name type="scientific">Haemophilus influenzae (strain PittGG)</name>
    <dbReference type="NCBI Taxonomy" id="374931"/>
    <lineage>
        <taxon>Bacteria</taxon>
        <taxon>Pseudomonadati</taxon>
        <taxon>Pseudomonadota</taxon>
        <taxon>Gammaproteobacteria</taxon>
        <taxon>Pasteurellales</taxon>
        <taxon>Pasteurellaceae</taxon>
        <taxon>Haemophilus</taxon>
    </lineage>
</organism>
<reference key="1">
    <citation type="journal article" date="2007" name="Genome Biol.">
        <title>Characterization and modeling of the Haemophilus influenzae core and supragenomes based on the complete genomic sequences of Rd and 12 clinical nontypeable strains.</title>
        <authorList>
            <person name="Hogg J.S."/>
            <person name="Hu F.Z."/>
            <person name="Janto B."/>
            <person name="Boissy R."/>
            <person name="Hayes J."/>
            <person name="Keefe R."/>
            <person name="Post J.C."/>
            <person name="Ehrlich G.D."/>
        </authorList>
    </citation>
    <scope>NUCLEOTIDE SEQUENCE [LARGE SCALE GENOMIC DNA]</scope>
    <source>
        <strain>PittGG</strain>
    </source>
</reference>
<keyword id="KW-0067">ATP-binding</keyword>
<keyword id="KW-0131">Cell cycle</keyword>
<keyword id="KW-0132">Cell division</keyword>
<keyword id="KW-0133">Cell shape</keyword>
<keyword id="KW-0961">Cell wall biogenesis/degradation</keyword>
<keyword id="KW-0963">Cytoplasm</keyword>
<keyword id="KW-0436">Ligase</keyword>
<keyword id="KW-0547">Nucleotide-binding</keyword>
<keyword id="KW-0573">Peptidoglycan synthesis</keyword>
<protein>
    <recommendedName>
        <fullName evidence="1">UDP-N-acetylmuramate--L-alanine ligase</fullName>
        <ecNumber evidence="1">6.3.2.8</ecNumber>
    </recommendedName>
    <alternativeName>
        <fullName evidence="1">UDP-N-acetylmuramoyl-L-alanine synthetase</fullName>
    </alternativeName>
</protein>
<dbReference type="EC" id="6.3.2.8" evidence="1"/>
<dbReference type="EMBL" id="CP000672">
    <property type="protein sequence ID" value="ABR00669.1"/>
    <property type="molecule type" value="Genomic_DNA"/>
</dbReference>
<dbReference type="SMR" id="A5UIR3"/>
<dbReference type="KEGG" id="hiq:CGSHiGG_09355"/>
<dbReference type="HOGENOM" id="CLU_028104_2_2_6"/>
<dbReference type="UniPathway" id="UPA00219"/>
<dbReference type="Proteomes" id="UP000001990">
    <property type="component" value="Chromosome"/>
</dbReference>
<dbReference type="GO" id="GO:0005737">
    <property type="term" value="C:cytoplasm"/>
    <property type="evidence" value="ECO:0007669"/>
    <property type="project" value="UniProtKB-SubCell"/>
</dbReference>
<dbReference type="GO" id="GO:0005524">
    <property type="term" value="F:ATP binding"/>
    <property type="evidence" value="ECO:0007669"/>
    <property type="project" value="UniProtKB-UniRule"/>
</dbReference>
<dbReference type="GO" id="GO:0008763">
    <property type="term" value="F:UDP-N-acetylmuramate-L-alanine ligase activity"/>
    <property type="evidence" value="ECO:0007669"/>
    <property type="project" value="UniProtKB-UniRule"/>
</dbReference>
<dbReference type="GO" id="GO:0051301">
    <property type="term" value="P:cell division"/>
    <property type="evidence" value="ECO:0007669"/>
    <property type="project" value="UniProtKB-KW"/>
</dbReference>
<dbReference type="GO" id="GO:0071555">
    <property type="term" value="P:cell wall organization"/>
    <property type="evidence" value="ECO:0007669"/>
    <property type="project" value="UniProtKB-KW"/>
</dbReference>
<dbReference type="GO" id="GO:0009252">
    <property type="term" value="P:peptidoglycan biosynthetic process"/>
    <property type="evidence" value="ECO:0007669"/>
    <property type="project" value="UniProtKB-UniRule"/>
</dbReference>
<dbReference type="GO" id="GO:0008360">
    <property type="term" value="P:regulation of cell shape"/>
    <property type="evidence" value="ECO:0007669"/>
    <property type="project" value="UniProtKB-KW"/>
</dbReference>
<dbReference type="FunFam" id="3.40.1190.10:FF:000001">
    <property type="entry name" value="UDP-N-acetylmuramate--L-alanine ligase"/>
    <property type="match status" value="1"/>
</dbReference>
<dbReference type="FunFam" id="3.40.50.720:FF:000046">
    <property type="entry name" value="UDP-N-acetylmuramate--L-alanine ligase"/>
    <property type="match status" value="1"/>
</dbReference>
<dbReference type="Gene3D" id="3.90.190.20">
    <property type="entry name" value="Mur ligase, C-terminal domain"/>
    <property type="match status" value="1"/>
</dbReference>
<dbReference type="Gene3D" id="3.40.1190.10">
    <property type="entry name" value="Mur-like, catalytic domain"/>
    <property type="match status" value="1"/>
</dbReference>
<dbReference type="Gene3D" id="3.40.50.720">
    <property type="entry name" value="NAD(P)-binding Rossmann-like Domain"/>
    <property type="match status" value="1"/>
</dbReference>
<dbReference type="HAMAP" id="MF_00046">
    <property type="entry name" value="MurC"/>
    <property type="match status" value="1"/>
</dbReference>
<dbReference type="InterPro" id="IPR036565">
    <property type="entry name" value="Mur-like_cat_sf"/>
</dbReference>
<dbReference type="InterPro" id="IPR004101">
    <property type="entry name" value="Mur_ligase_C"/>
</dbReference>
<dbReference type="InterPro" id="IPR036615">
    <property type="entry name" value="Mur_ligase_C_dom_sf"/>
</dbReference>
<dbReference type="InterPro" id="IPR013221">
    <property type="entry name" value="Mur_ligase_cen"/>
</dbReference>
<dbReference type="InterPro" id="IPR000713">
    <property type="entry name" value="Mur_ligase_N"/>
</dbReference>
<dbReference type="InterPro" id="IPR050061">
    <property type="entry name" value="MurCDEF_pg_biosynth"/>
</dbReference>
<dbReference type="InterPro" id="IPR005758">
    <property type="entry name" value="UDP-N-AcMur_Ala_ligase_MurC"/>
</dbReference>
<dbReference type="NCBIfam" id="TIGR01082">
    <property type="entry name" value="murC"/>
    <property type="match status" value="1"/>
</dbReference>
<dbReference type="PANTHER" id="PTHR43445:SF3">
    <property type="entry name" value="UDP-N-ACETYLMURAMATE--L-ALANINE LIGASE"/>
    <property type="match status" value="1"/>
</dbReference>
<dbReference type="PANTHER" id="PTHR43445">
    <property type="entry name" value="UDP-N-ACETYLMURAMATE--L-ALANINE LIGASE-RELATED"/>
    <property type="match status" value="1"/>
</dbReference>
<dbReference type="Pfam" id="PF01225">
    <property type="entry name" value="Mur_ligase"/>
    <property type="match status" value="1"/>
</dbReference>
<dbReference type="Pfam" id="PF02875">
    <property type="entry name" value="Mur_ligase_C"/>
    <property type="match status" value="1"/>
</dbReference>
<dbReference type="Pfam" id="PF08245">
    <property type="entry name" value="Mur_ligase_M"/>
    <property type="match status" value="1"/>
</dbReference>
<dbReference type="SUPFAM" id="SSF51984">
    <property type="entry name" value="MurCD N-terminal domain"/>
    <property type="match status" value="1"/>
</dbReference>
<dbReference type="SUPFAM" id="SSF53623">
    <property type="entry name" value="MurD-like peptide ligases, catalytic domain"/>
    <property type="match status" value="1"/>
</dbReference>
<dbReference type="SUPFAM" id="SSF53244">
    <property type="entry name" value="MurD-like peptide ligases, peptide-binding domain"/>
    <property type="match status" value="1"/>
</dbReference>
<comment type="function">
    <text evidence="1">Cell wall formation.</text>
</comment>
<comment type="catalytic activity">
    <reaction evidence="1">
        <text>UDP-N-acetyl-alpha-D-muramate + L-alanine + ATP = UDP-N-acetyl-alpha-D-muramoyl-L-alanine + ADP + phosphate + H(+)</text>
        <dbReference type="Rhea" id="RHEA:23372"/>
        <dbReference type="ChEBI" id="CHEBI:15378"/>
        <dbReference type="ChEBI" id="CHEBI:30616"/>
        <dbReference type="ChEBI" id="CHEBI:43474"/>
        <dbReference type="ChEBI" id="CHEBI:57972"/>
        <dbReference type="ChEBI" id="CHEBI:70757"/>
        <dbReference type="ChEBI" id="CHEBI:83898"/>
        <dbReference type="ChEBI" id="CHEBI:456216"/>
        <dbReference type="EC" id="6.3.2.8"/>
    </reaction>
</comment>
<comment type="pathway">
    <text evidence="1">Cell wall biogenesis; peptidoglycan biosynthesis.</text>
</comment>
<comment type="subcellular location">
    <subcellularLocation>
        <location evidence="1">Cytoplasm</location>
    </subcellularLocation>
</comment>
<comment type="similarity">
    <text evidence="1">Belongs to the MurCDEF family.</text>
</comment>
<proteinExistence type="inferred from homology"/>
<feature type="chain" id="PRO_1000004350" description="UDP-N-acetylmuramate--L-alanine ligase">
    <location>
        <begin position="1"/>
        <end position="475"/>
    </location>
</feature>
<feature type="binding site" evidence="1">
    <location>
        <begin position="125"/>
        <end position="131"/>
    </location>
    <ligand>
        <name>ATP</name>
        <dbReference type="ChEBI" id="CHEBI:30616"/>
    </ligand>
</feature>
<evidence type="ECO:0000255" key="1">
    <source>
        <dbReference type="HAMAP-Rule" id="MF_00046"/>
    </source>
</evidence>